<protein>
    <recommendedName>
        <fullName>Uncharacterized 7.3 kDa protein in cox-rep intergenic region</fullName>
    </recommendedName>
    <alternativeName>
        <fullName>ORF23</fullName>
    </alternativeName>
    <alternativeName>
        <fullName>ORF7</fullName>
    </alternativeName>
</protein>
<accession>P69620</accession>
<accession>P51708</accession>
<proteinExistence type="predicted"/>
<organismHost>
    <name type="scientific">Haemophilus influenzae</name>
    <dbReference type="NCBI Taxonomy" id="727"/>
</organismHost>
<feature type="chain" id="PRO_0000165321" description="Uncharacterized 7.3 kDa protein in cox-rep intergenic region">
    <location>
        <begin position="1"/>
        <end position="61"/>
    </location>
</feature>
<name>YO07_BPHC1</name>
<keyword id="KW-1185">Reference proteome</keyword>
<sequence>MATKNRTIIKKYADRWHKEACHLYAKWLNAKRQGDEEAANYYFSKYITAGDNWINYTKFAH</sequence>
<reference key="1">
    <citation type="journal article" date="1994" name="Mol. Microbiol.">
        <title>Identification of an HP1 phage protein required for site-specific excision.</title>
        <authorList>
            <person name="Esposito D."/>
            <person name="Scocca J.J."/>
        </authorList>
    </citation>
    <scope>NUCLEOTIDE SEQUENCE [GENOMIC DNA]</scope>
</reference>
<reference key="2">
    <citation type="journal article" date="1996" name="Nucleic Acids Res.">
        <title>The complete nucleotide sequence of bacteriophage HP1 DNA.</title>
        <authorList>
            <person name="Esposito D."/>
            <person name="Fitzmaurice W.P."/>
            <person name="Benjamin R.C."/>
            <person name="Goodman S.D."/>
            <person name="Waldman A.S."/>
            <person name="Scocca J.J."/>
        </authorList>
    </citation>
    <scope>NUCLEOTIDE SEQUENCE [LARGE SCALE GENOMIC DNA]</scope>
</reference>
<dbReference type="EMBL" id="U24159">
    <property type="protein sequence ID" value="AAB09191.1"/>
    <property type="molecule type" value="Genomic_DNA"/>
</dbReference>
<dbReference type="PIR" id="S72338">
    <property type="entry name" value="S72338"/>
</dbReference>
<dbReference type="RefSeq" id="NP_043475.1">
    <property type="nucleotide sequence ID" value="NC_001697.1"/>
</dbReference>
<dbReference type="SMR" id="P69620"/>
<dbReference type="GeneID" id="1261125"/>
<dbReference type="KEGG" id="vg:1261125"/>
<dbReference type="Proteomes" id="UP000001713">
    <property type="component" value="Segment"/>
</dbReference>
<organism>
    <name type="scientific">Haemophilus phage HP1 (strain HP1c1)</name>
    <name type="common">Bacteriophage HP1</name>
    <dbReference type="NCBI Taxonomy" id="1289570"/>
    <lineage>
        <taxon>Viruses</taxon>
        <taxon>Duplodnaviria</taxon>
        <taxon>Heunggongvirae</taxon>
        <taxon>Uroviricota</taxon>
        <taxon>Caudoviricetes</taxon>
        <taxon>Peduoviridae</taxon>
        <taxon>Hpunavirus</taxon>
        <taxon>Haemophilus phage HP1</taxon>
    </lineage>
</organism>